<reference key="1">
    <citation type="submission" date="2008-02" db="EMBL/GenBank/DDBJ databases">
        <title>Complete sequence of Pseudomonas putida W619.</title>
        <authorList>
            <person name="Copeland A."/>
            <person name="Lucas S."/>
            <person name="Lapidus A."/>
            <person name="Barry K."/>
            <person name="Detter J.C."/>
            <person name="Glavina del Rio T."/>
            <person name="Dalin E."/>
            <person name="Tice H."/>
            <person name="Pitluck S."/>
            <person name="Chain P."/>
            <person name="Malfatti S."/>
            <person name="Shin M."/>
            <person name="Vergez L."/>
            <person name="Schmutz J."/>
            <person name="Larimer F."/>
            <person name="Land M."/>
            <person name="Hauser L."/>
            <person name="Kyrpides N."/>
            <person name="Kim E."/>
            <person name="Taghavi S."/>
            <person name="Vangronsveld D."/>
            <person name="van der Lelie D."/>
            <person name="Richardson P."/>
        </authorList>
    </citation>
    <scope>NUCLEOTIDE SEQUENCE [LARGE SCALE GENOMIC DNA]</scope>
    <source>
        <strain>W619</strain>
    </source>
</reference>
<evidence type="ECO:0000255" key="1">
    <source>
        <dbReference type="HAMAP-Rule" id="MF_01374"/>
    </source>
</evidence>
<organism>
    <name type="scientific">Pseudomonas putida (strain W619)</name>
    <dbReference type="NCBI Taxonomy" id="390235"/>
    <lineage>
        <taxon>Bacteria</taxon>
        <taxon>Pseudomonadati</taxon>
        <taxon>Pseudomonadota</taxon>
        <taxon>Gammaproteobacteria</taxon>
        <taxon>Pseudomonadales</taxon>
        <taxon>Pseudomonadaceae</taxon>
        <taxon>Pseudomonas</taxon>
    </lineage>
</organism>
<dbReference type="EC" id="3.1.2.6" evidence="1"/>
<dbReference type="EMBL" id="CP000949">
    <property type="protein sequence ID" value="ACA73952.1"/>
    <property type="molecule type" value="Genomic_DNA"/>
</dbReference>
<dbReference type="SMR" id="B1JBN3"/>
<dbReference type="STRING" id="390235.PputW619_3469"/>
<dbReference type="KEGG" id="ppw:PputW619_3469"/>
<dbReference type="eggNOG" id="COG0491">
    <property type="taxonomic scope" value="Bacteria"/>
</dbReference>
<dbReference type="HOGENOM" id="CLU_030571_4_1_6"/>
<dbReference type="OrthoDB" id="9802248at2"/>
<dbReference type="UniPathway" id="UPA00619">
    <property type="reaction ID" value="UER00676"/>
</dbReference>
<dbReference type="GO" id="GO:0004416">
    <property type="term" value="F:hydroxyacylglutathione hydrolase activity"/>
    <property type="evidence" value="ECO:0007669"/>
    <property type="project" value="UniProtKB-UniRule"/>
</dbReference>
<dbReference type="GO" id="GO:0046872">
    <property type="term" value="F:metal ion binding"/>
    <property type="evidence" value="ECO:0007669"/>
    <property type="project" value="UniProtKB-KW"/>
</dbReference>
<dbReference type="GO" id="GO:0019243">
    <property type="term" value="P:methylglyoxal catabolic process to D-lactate via S-lactoyl-glutathione"/>
    <property type="evidence" value="ECO:0007669"/>
    <property type="project" value="InterPro"/>
</dbReference>
<dbReference type="CDD" id="cd07723">
    <property type="entry name" value="hydroxyacylglutathione_hydrolase_MBL-fold"/>
    <property type="match status" value="1"/>
</dbReference>
<dbReference type="Gene3D" id="3.60.15.10">
    <property type="entry name" value="Ribonuclease Z/Hydroxyacylglutathione hydrolase-like"/>
    <property type="match status" value="1"/>
</dbReference>
<dbReference type="HAMAP" id="MF_01374">
    <property type="entry name" value="Glyoxalase_2"/>
    <property type="match status" value="1"/>
</dbReference>
<dbReference type="InterPro" id="IPR035680">
    <property type="entry name" value="Clx_II_MBL"/>
</dbReference>
<dbReference type="InterPro" id="IPR050110">
    <property type="entry name" value="Glyoxalase_II_hydrolase"/>
</dbReference>
<dbReference type="InterPro" id="IPR032282">
    <property type="entry name" value="HAGH_C"/>
</dbReference>
<dbReference type="InterPro" id="IPR017782">
    <property type="entry name" value="Hydroxyacylglutathione_Hdrlase"/>
</dbReference>
<dbReference type="InterPro" id="IPR001279">
    <property type="entry name" value="Metallo-B-lactamas"/>
</dbReference>
<dbReference type="InterPro" id="IPR036866">
    <property type="entry name" value="RibonucZ/Hydroxyglut_hydro"/>
</dbReference>
<dbReference type="NCBIfam" id="TIGR03413">
    <property type="entry name" value="GSH_gloB"/>
    <property type="match status" value="1"/>
</dbReference>
<dbReference type="PANTHER" id="PTHR43705">
    <property type="entry name" value="HYDROXYACYLGLUTATHIONE HYDROLASE"/>
    <property type="match status" value="1"/>
</dbReference>
<dbReference type="PANTHER" id="PTHR43705:SF1">
    <property type="entry name" value="HYDROXYACYLGLUTATHIONE HYDROLASE GLOB"/>
    <property type="match status" value="1"/>
</dbReference>
<dbReference type="Pfam" id="PF16123">
    <property type="entry name" value="HAGH_C"/>
    <property type="match status" value="1"/>
</dbReference>
<dbReference type="Pfam" id="PF00753">
    <property type="entry name" value="Lactamase_B"/>
    <property type="match status" value="1"/>
</dbReference>
<dbReference type="PIRSF" id="PIRSF005457">
    <property type="entry name" value="Glx"/>
    <property type="match status" value="1"/>
</dbReference>
<dbReference type="SMART" id="SM00849">
    <property type="entry name" value="Lactamase_B"/>
    <property type="match status" value="1"/>
</dbReference>
<dbReference type="SUPFAM" id="SSF56281">
    <property type="entry name" value="Metallo-hydrolase/oxidoreductase"/>
    <property type="match status" value="1"/>
</dbReference>
<protein>
    <recommendedName>
        <fullName evidence="1">Hydroxyacylglutathione hydrolase</fullName>
        <ecNumber evidence="1">3.1.2.6</ecNumber>
    </recommendedName>
    <alternativeName>
        <fullName evidence="1">Glyoxalase II</fullName>
        <shortName evidence="1">Glx II</shortName>
    </alternativeName>
</protein>
<proteinExistence type="inferred from homology"/>
<comment type="function">
    <text evidence="1">Thiolesterase that catalyzes the hydrolysis of S-D-lactoyl-glutathione to form glutathione and D-lactic acid.</text>
</comment>
<comment type="catalytic activity">
    <reaction evidence="1">
        <text>an S-(2-hydroxyacyl)glutathione + H2O = a 2-hydroxy carboxylate + glutathione + H(+)</text>
        <dbReference type="Rhea" id="RHEA:21864"/>
        <dbReference type="ChEBI" id="CHEBI:15377"/>
        <dbReference type="ChEBI" id="CHEBI:15378"/>
        <dbReference type="ChEBI" id="CHEBI:57925"/>
        <dbReference type="ChEBI" id="CHEBI:58896"/>
        <dbReference type="ChEBI" id="CHEBI:71261"/>
        <dbReference type="EC" id="3.1.2.6"/>
    </reaction>
</comment>
<comment type="cofactor">
    <cofactor evidence="1">
        <name>Zn(2+)</name>
        <dbReference type="ChEBI" id="CHEBI:29105"/>
    </cofactor>
    <text evidence="1">Binds 2 Zn(2+) ions per subunit.</text>
</comment>
<comment type="pathway">
    <text evidence="1">Secondary metabolite metabolism; methylglyoxal degradation; (R)-lactate from methylglyoxal: step 2/2.</text>
</comment>
<comment type="subunit">
    <text evidence="1">Monomer.</text>
</comment>
<comment type="similarity">
    <text evidence="1">Belongs to the metallo-beta-lactamase superfamily. Glyoxalase II family.</text>
</comment>
<accession>B1JBN3</accession>
<keyword id="KW-0378">Hydrolase</keyword>
<keyword id="KW-0479">Metal-binding</keyword>
<keyword id="KW-0862">Zinc</keyword>
<sequence>MIQIDALPAFSDNYIWLLQDTAKRRCAVVDPGDAAPVEAWLAANPDWVLEDILVTHHHNDHVGGVERLKKLTGARVSGPANERIPCRDLALDEGDEVTAVGVTFQVLAVPGHTLGHIAFFSDQPATPVLFSGDTLFAAGCGRMFEGTPEQMQPALARLASLPERTEVYCAHEYTLSNLRFAKAVEPQNPHVLQRFDDVTRLRADNRITLPSTIGLERLTNPFLRTSATLVKQKADEWKGHSNTTHVAVFAALRSWKDTF</sequence>
<feature type="chain" id="PRO_1000144788" description="Hydroxyacylglutathione hydrolase">
    <location>
        <begin position="1"/>
        <end position="259"/>
    </location>
</feature>
<feature type="binding site" evidence="1">
    <location>
        <position position="56"/>
    </location>
    <ligand>
        <name>Zn(2+)</name>
        <dbReference type="ChEBI" id="CHEBI:29105"/>
        <label>1</label>
    </ligand>
</feature>
<feature type="binding site" evidence="1">
    <location>
        <position position="58"/>
    </location>
    <ligand>
        <name>Zn(2+)</name>
        <dbReference type="ChEBI" id="CHEBI:29105"/>
        <label>1</label>
    </ligand>
</feature>
<feature type="binding site" evidence="1">
    <location>
        <position position="60"/>
    </location>
    <ligand>
        <name>Zn(2+)</name>
        <dbReference type="ChEBI" id="CHEBI:29105"/>
        <label>2</label>
    </ligand>
</feature>
<feature type="binding site" evidence="1">
    <location>
        <position position="61"/>
    </location>
    <ligand>
        <name>Zn(2+)</name>
        <dbReference type="ChEBI" id="CHEBI:29105"/>
        <label>2</label>
    </ligand>
</feature>
<feature type="binding site" evidence="1">
    <location>
        <position position="112"/>
    </location>
    <ligand>
        <name>Zn(2+)</name>
        <dbReference type="ChEBI" id="CHEBI:29105"/>
        <label>1</label>
    </ligand>
</feature>
<feature type="binding site" evidence="1">
    <location>
        <position position="133"/>
    </location>
    <ligand>
        <name>Zn(2+)</name>
        <dbReference type="ChEBI" id="CHEBI:29105"/>
        <label>1</label>
    </ligand>
</feature>
<feature type="binding site" evidence="1">
    <location>
        <position position="133"/>
    </location>
    <ligand>
        <name>Zn(2+)</name>
        <dbReference type="ChEBI" id="CHEBI:29105"/>
        <label>2</label>
    </ligand>
</feature>
<feature type="binding site" evidence="1">
    <location>
        <position position="171"/>
    </location>
    <ligand>
        <name>Zn(2+)</name>
        <dbReference type="ChEBI" id="CHEBI:29105"/>
        <label>2</label>
    </ligand>
</feature>
<gene>
    <name evidence="1" type="primary">gloB</name>
    <name type="ordered locus">PputW619_3469</name>
</gene>
<name>GLO2_PSEPW</name>